<dbReference type="EC" id="1.14.14.95" evidence="5"/>
<dbReference type="EMBL" id="KC964544">
    <property type="protein sequence ID" value="AHN62855.1"/>
    <property type="molecule type" value="mRNA"/>
</dbReference>
<dbReference type="SMR" id="X2JI34"/>
<dbReference type="UniPathway" id="UPA00213"/>
<dbReference type="GO" id="GO:0005789">
    <property type="term" value="C:endoplasmic reticulum membrane"/>
    <property type="evidence" value="ECO:0007669"/>
    <property type="project" value="UniProtKB-SubCell"/>
</dbReference>
<dbReference type="GO" id="GO:0106223">
    <property type="term" value="F:germacrene A hydroxylase activity"/>
    <property type="evidence" value="ECO:0000314"/>
    <property type="project" value="UniProtKB"/>
</dbReference>
<dbReference type="GO" id="GO:0020037">
    <property type="term" value="F:heme binding"/>
    <property type="evidence" value="ECO:0007669"/>
    <property type="project" value="InterPro"/>
</dbReference>
<dbReference type="GO" id="GO:0005506">
    <property type="term" value="F:iron ion binding"/>
    <property type="evidence" value="ECO:0007669"/>
    <property type="project" value="InterPro"/>
</dbReference>
<dbReference type="GO" id="GO:0051762">
    <property type="term" value="P:sesquiterpene biosynthetic process"/>
    <property type="evidence" value="ECO:0000314"/>
    <property type="project" value="UniProtKB"/>
</dbReference>
<dbReference type="GO" id="GO:0016114">
    <property type="term" value="P:terpenoid biosynthetic process"/>
    <property type="evidence" value="ECO:0007669"/>
    <property type="project" value="UniProtKB-UniPathway"/>
</dbReference>
<dbReference type="CDD" id="cd11072">
    <property type="entry name" value="CYP71-like"/>
    <property type="match status" value="1"/>
</dbReference>
<dbReference type="FunFam" id="1.10.630.10:FF:000043">
    <property type="entry name" value="Cytochrome P450 99A2"/>
    <property type="match status" value="1"/>
</dbReference>
<dbReference type="Gene3D" id="1.10.630.10">
    <property type="entry name" value="Cytochrome P450"/>
    <property type="match status" value="1"/>
</dbReference>
<dbReference type="InterPro" id="IPR001128">
    <property type="entry name" value="Cyt_P450"/>
</dbReference>
<dbReference type="InterPro" id="IPR017972">
    <property type="entry name" value="Cyt_P450_CS"/>
</dbReference>
<dbReference type="InterPro" id="IPR002401">
    <property type="entry name" value="Cyt_P450_E_grp-I"/>
</dbReference>
<dbReference type="InterPro" id="IPR036396">
    <property type="entry name" value="Cyt_P450_sf"/>
</dbReference>
<dbReference type="PANTHER" id="PTHR47955">
    <property type="entry name" value="CYTOCHROME P450 FAMILY 71 PROTEIN"/>
    <property type="match status" value="1"/>
</dbReference>
<dbReference type="PANTHER" id="PTHR47955:SF9">
    <property type="entry name" value="PREMNASPIRODIENE OXYGENASE-LIKE"/>
    <property type="match status" value="1"/>
</dbReference>
<dbReference type="Pfam" id="PF00067">
    <property type="entry name" value="p450"/>
    <property type="match status" value="1"/>
</dbReference>
<dbReference type="PRINTS" id="PR00463">
    <property type="entry name" value="EP450I"/>
</dbReference>
<dbReference type="PRINTS" id="PR00385">
    <property type="entry name" value="P450"/>
</dbReference>
<dbReference type="SUPFAM" id="SSF48264">
    <property type="entry name" value="Cytochrome P450"/>
    <property type="match status" value="1"/>
</dbReference>
<dbReference type="PROSITE" id="PS00086">
    <property type="entry name" value="CYTOCHROME_P450"/>
    <property type="match status" value="1"/>
</dbReference>
<name>GAO_TANPA</name>
<comment type="function">
    <text evidence="5 7">Involved in the biosynthesis of germacrene-derived sesquiterpene lactones (PubMed:30468448). Component of the parthenolide biosynthetic pathway; parthenolide and conjugates are promising anti-cancer drugs highly active against colon cancer cells (PubMed:30468448). Catalyzes three consecutive oxidations of germacrene A to produce germacrene A acid (PubMed:24704560).</text>
</comment>
<comment type="catalytic activity">
    <reaction evidence="5">
        <text>(+)-(R)-germacrene A + 3 reduced [NADPH--hemoprotein reductase] + 3 O2 = germacra-1(10),4,11(13)-trien-12-oate + 3 oxidized [NADPH--hemoprotein reductase] + 4 H2O + 4 H(+)</text>
        <dbReference type="Rhea" id="RHEA:30303"/>
        <dbReference type="Rhea" id="RHEA-COMP:11964"/>
        <dbReference type="Rhea" id="RHEA-COMP:11965"/>
        <dbReference type="ChEBI" id="CHEBI:15377"/>
        <dbReference type="ChEBI" id="CHEBI:15378"/>
        <dbReference type="ChEBI" id="CHEBI:15379"/>
        <dbReference type="ChEBI" id="CHEBI:41595"/>
        <dbReference type="ChEBI" id="CHEBI:57618"/>
        <dbReference type="ChEBI" id="CHEBI:58210"/>
        <dbReference type="ChEBI" id="CHEBI:61301"/>
        <dbReference type="EC" id="1.14.14.95"/>
    </reaction>
    <physiologicalReaction direction="left-to-right" evidence="5">
        <dbReference type="Rhea" id="RHEA:30304"/>
    </physiologicalReaction>
</comment>
<comment type="pathway">
    <text evidence="7">Secondary metabolite biosynthesis; terpenoid biosynthesis.</text>
</comment>
<comment type="subcellular location">
    <subcellularLocation>
        <location evidence="1">Endoplasmic reticulum membrane</location>
        <topology evidence="1">Single-pass type II membrane protein</topology>
    </subcellularLocation>
</comment>
<comment type="tissue specificity">
    <text evidence="5">Expressed in floral glandular trichomes.</text>
</comment>
<comment type="developmental stage">
    <text evidence="5">During ovary development, accumulates until the stage 3 and fades out progressively to disappear at stage 6.</text>
</comment>
<comment type="similarity">
    <text evidence="8">Belongs to the cytochrome P450 family.</text>
</comment>
<proteinExistence type="evidence at protein level"/>
<sequence>MALSLTTSIALATILFFVYKFATRSKSTKNSLPEPWRLPIIGHMHHLIGTIPHRGVMDLARKYGSLMHLQLGEVSTIVVSSPKWAKEILTTYDITFANRPETLTGEIVAYHNTDIVLAPYGEYWRQLRKLCTLELLSVKKVKSFQSLREEECWNLVQEIKASGSGRPVNLSENIFKLIATILSRAAFGKGIKDQKEFTEIVKEILRQTGGFDVADIFPSKKFLHHLSGKRARLTSIHQKLDNLINNLVAEHTVKTSSKTNETLLDVLLRLKDSAEFPLTADNVKAIILDMFGAGTDTSSATIEWAISELIKCPRAMEKVQVELRKALNGKERIHEEDIQELSYLNLVIKETLRLHPPLPLVMPRECRQPVNLAGYDIPNKTKLIVNVFAINRDPEYWKDAETFIPERFENSSTTVMGAEYEYLPFGAGRRMCPGAALGLANVQLPLANILYHFNWKLPNGASYDQIDMTESFGATVQRKTELLLVPSF</sequence>
<protein>
    <recommendedName>
        <fullName evidence="6">Germacrene A hydroxylase</fullName>
        <ecNumber evidence="5">1.14.14.95</ecNumber>
    </recommendedName>
    <alternativeName>
        <fullName evidence="6">Germacrene A oxidase</fullName>
        <shortName evidence="6">TpGAO</shortName>
    </alternativeName>
</protein>
<feature type="chain" id="PRO_0000448396" description="Germacrene A hydroxylase">
    <location>
        <begin position="1"/>
        <end position="488"/>
    </location>
</feature>
<feature type="transmembrane region" description="Helical; Signal-anchor for type II membrane protein" evidence="3">
    <location>
        <begin position="7"/>
        <end position="23"/>
    </location>
</feature>
<feature type="binding site" description="axial binding residue" evidence="2">
    <location>
        <position position="432"/>
    </location>
    <ligand>
        <name>heme</name>
        <dbReference type="ChEBI" id="CHEBI:30413"/>
    </ligand>
    <ligandPart>
        <name>Fe</name>
        <dbReference type="ChEBI" id="CHEBI:18248"/>
    </ligandPart>
</feature>
<feature type="glycosylation site" description="N-linked (GlcNAc...) asparagine" evidence="4">
    <location>
        <position position="169"/>
    </location>
</feature>
<feature type="glycosylation site" description="N-linked (GlcNAc...) asparagine" evidence="4">
    <location>
        <position position="260"/>
    </location>
</feature>
<feature type="glycosylation site" description="N-linked (GlcNAc...) asparagine" evidence="4">
    <location>
        <position position="379"/>
    </location>
</feature>
<feature type="glycosylation site" description="N-linked (GlcNAc...) asparagine" evidence="4">
    <location>
        <position position="410"/>
    </location>
</feature>
<reference key="1">
    <citation type="journal article" date="2014" name="Metab. Eng.">
        <title>Elucidation and in planta reconstitution of the parthenolide biosynthetic pathway.</title>
        <authorList>
            <person name="Liu Q."/>
            <person name="Manzano D."/>
            <person name="Tanic N."/>
            <person name="Pesic M."/>
            <person name="Bankovic J."/>
            <person name="Pateraki I."/>
            <person name="Ricard L."/>
            <person name="Ferrer A."/>
            <person name="de Vos R."/>
            <person name="van de Krol S."/>
            <person name="Bouwmeester H."/>
        </authorList>
    </citation>
    <scope>NUCLEOTIDE SEQUENCE [MRNA]</scope>
    <scope>FUNCTION</scope>
    <scope>CATALYTIC ACTIVITY</scope>
    <scope>TISSUE SPECIFICITY</scope>
    <scope>DEVELOPMENTAL STAGE</scope>
</reference>
<reference key="2">
    <citation type="journal article" date="2019" name="Nat. Prod. Rep.">
        <title>Non-volatile natural products in plant glandular trichomes: chemistry, biological activities and biosynthesis.</title>
        <authorList>
            <person name="Liu Y."/>
            <person name="Jing S.-X."/>
            <person name="Luo S.-H."/>
            <person name="Li S.-H."/>
        </authorList>
    </citation>
    <scope>PATHWAY</scope>
    <scope>REVIEW</scope>
</reference>
<keyword id="KW-0256">Endoplasmic reticulum</keyword>
<keyword id="KW-0325">Glycoprotein</keyword>
<keyword id="KW-0349">Heme</keyword>
<keyword id="KW-0408">Iron</keyword>
<keyword id="KW-0472">Membrane</keyword>
<keyword id="KW-0479">Metal-binding</keyword>
<keyword id="KW-0503">Monooxygenase</keyword>
<keyword id="KW-0560">Oxidoreductase</keyword>
<keyword id="KW-0735">Signal-anchor</keyword>
<keyword id="KW-0812">Transmembrane</keyword>
<keyword id="KW-1133">Transmembrane helix</keyword>
<accession>X2JI34</accession>
<organism>
    <name type="scientific">Tanacetum parthenium</name>
    <name type="common">Feverfew</name>
    <name type="synonym">Matricaria parthenium</name>
    <dbReference type="NCBI Taxonomy" id="127999"/>
    <lineage>
        <taxon>Eukaryota</taxon>
        <taxon>Viridiplantae</taxon>
        <taxon>Streptophyta</taxon>
        <taxon>Embryophyta</taxon>
        <taxon>Tracheophyta</taxon>
        <taxon>Spermatophyta</taxon>
        <taxon>Magnoliopsida</taxon>
        <taxon>eudicotyledons</taxon>
        <taxon>Gunneridae</taxon>
        <taxon>Pentapetalae</taxon>
        <taxon>asterids</taxon>
        <taxon>campanulids</taxon>
        <taxon>Asterales</taxon>
        <taxon>Asteraceae</taxon>
        <taxon>Asteroideae</taxon>
        <taxon>Anthemideae</taxon>
        <taxon>Anthemidinae</taxon>
        <taxon>Tanacetum</taxon>
    </lineage>
</organism>
<evidence type="ECO:0000250" key="1">
    <source>
        <dbReference type="UniProtKB" id="D5JBW8"/>
    </source>
</evidence>
<evidence type="ECO:0000250" key="2">
    <source>
        <dbReference type="UniProtKB" id="P04798"/>
    </source>
</evidence>
<evidence type="ECO:0000255" key="3"/>
<evidence type="ECO:0000255" key="4">
    <source>
        <dbReference type="PROSITE-ProRule" id="PRU00498"/>
    </source>
</evidence>
<evidence type="ECO:0000269" key="5">
    <source>
    </source>
</evidence>
<evidence type="ECO:0000303" key="6">
    <source>
    </source>
</evidence>
<evidence type="ECO:0000303" key="7">
    <source>
    </source>
</evidence>
<evidence type="ECO:0000305" key="8"/>